<sequence length="671" mass="74485">MTGRLAIEDVRPRIAGGSQPSKAVIGEMIPVSALVWREGHDAVSATLNVISPTGEVTRTTMEPAPFDQDKMFSSFVPDALGTWKFRVDAWSDPMSTWRHAVIAKIEVGQDEDDLFNDLEHGAQLFEKAAENASKPTAQKLFAVADSLRSNQPLRARVAPALSKEIHEILHEHPVRELLTRGQNHTVLVERKKAQFSSWYELFPRSTGGWDTDGNPVHGTFSTTAKALKRVAAMGFDTVYFPPIHPIGEIHRKGKNNSLIAEANDVGSPWAIGSAAGGHDAVHPQLGTLKDFQALVSTAEELGLSVALDLALQAAPDHPWARTHQDFFTVLADGTIAYAENPPKKYQDIYPLNFDNNKSAIYAELKRIVLFWIAQGVTVFRVDNPHTKPANFWEWLISTIHETHPEVIFLAEAFTRPARLYGLGKVGFSQSYTYFTWRTTKSELEEFGTEIAAMADVSRPNLFVNTPDILHESLQHGGRAMFAIRAALAATLSPLWGVYSGFELYENEAVSANSEEYLDSEKYELRPRDFTAALEQGDSLEPYLGTLNAIRRAHPALQQLRVIDFHSTDNENIIAYSKVDPVSGDAILVVINLDPTHAHSATVDLTMNAIGCEDVDHFTVTDLVTGAQFPWNKRTYVRLDPCADVAHILELPVVEESKRKALSWRTPTDYSN</sequence>
<comment type="function">
    <text evidence="1">Maltosyltransferase that uses maltose 1-phosphate (M1P) as the sugar donor to elongate linear or branched alpha-(1-&gt;4)-glucans. Is involved in a branched alpha-glucan biosynthetic pathway from trehalose, together with TreS, Mak and GlgB.</text>
</comment>
<comment type="catalytic activity">
    <reaction evidence="1">
        <text>alpha-maltose 1-phosphate + [(1-&gt;4)-alpha-D-glucosyl](n) = [(1-&gt;4)-alpha-D-glucosyl](n+2) + phosphate</text>
        <dbReference type="Rhea" id="RHEA:42692"/>
        <dbReference type="Rhea" id="RHEA-COMP:9584"/>
        <dbReference type="Rhea" id="RHEA-COMP:10183"/>
        <dbReference type="ChEBI" id="CHEBI:15444"/>
        <dbReference type="ChEBI" id="CHEBI:43474"/>
        <dbReference type="ChEBI" id="CHEBI:63576"/>
        <dbReference type="EC" id="2.4.99.16"/>
    </reaction>
</comment>
<comment type="subunit">
    <text evidence="1">Homodimer.</text>
</comment>
<comment type="similarity">
    <text evidence="1">Belongs to the glycosyl hydrolase 13 family. GlgE subfamily.</text>
</comment>
<comment type="sequence caution" evidence="2">
    <conflict type="erroneous initiation">
        <sequence resource="EMBL-CDS" id="ADL20743"/>
    </conflict>
    <text>Truncated N-terminus.</text>
</comment>
<dbReference type="EC" id="2.4.99.16" evidence="1"/>
<dbReference type="EMBL" id="CP001809">
    <property type="protein sequence ID" value="ADL20743.1"/>
    <property type="status" value="ALT_INIT"/>
    <property type="molecule type" value="Genomic_DNA"/>
</dbReference>
<dbReference type="RefSeq" id="WP_013241714.1">
    <property type="nucleotide sequence ID" value="NC_017300.2"/>
</dbReference>
<dbReference type="SMR" id="D9Q7U8"/>
<dbReference type="CAZy" id="GH13">
    <property type="family name" value="Glycoside Hydrolase Family 13"/>
</dbReference>
<dbReference type="KEGG" id="cpk:CP1002_08820"/>
<dbReference type="PATRIC" id="fig|679896.3.peg.889"/>
<dbReference type="HOGENOM" id="CLU_015798_0_0_11"/>
<dbReference type="GO" id="GO:0016758">
    <property type="term" value="F:hexosyltransferase activity"/>
    <property type="evidence" value="ECO:0007669"/>
    <property type="project" value="UniProtKB-UniRule"/>
</dbReference>
<dbReference type="GO" id="GO:0004553">
    <property type="term" value="F:hydrolase activity, hydrolyzing O-glycosyl compounds"/>
    <property type="evidence" value="ECO:0007669"/>
    <property type="project" value="InterPro"/>
</dbReference>
<dbReference type="GO" id="GO:0030979">
    <property type="term" value="P:alpha-glucan biosynthetic process"/>
    <property type="evidence" value="ECO:0007669"/>
    <property type="project" value="UniProtKB-UniRule"/>
</dbReference>
<dbReference type="CDD" id="cd11344">
    <property type="entry name" value="AmyAc_GlgE_like"/>
    <property type="match status" value="1"/>
</dbReference>
<dbReference type="Gene3D" id="3.20.20.80">
    <property type="entry name" value="Glycosidases"/>
    <property type="match status" value="1"/>
</dbReference>
<dbReference type="Gene3D" id="2.60.40.1180">
    <property type="entry name" value="Golgi alpha-mannosidase II"/>
    <property type="match status" value="1"/>
</dbReference>
<dbReference type="Gene3D" id="2.60.40.10">
    <property type="entry name" value="Immunoglobulins"/>
    <property type="match status" value="1"/>
</dbReference>
<dbReference type="Gene3D" id="1.20.58.80">
    <property type="entry name" value="Phosphotransferase system, lactose/cellobiose-type IIA subunit"/>
    <property type="match status" value="1"/>
</dbReference>
<dbReference type="HAMAP" id="MF_02124">
    <property type="entry name" value="GlgE"/>
    <property type="match status" value="1"/>
</dbReference>
<dbReference type="InterPro" id="IPR026585">
    <property type="entry name" value="GlgE"/>
</dbReference>
<dbReference type="InterPro" id="IPR049171">
    <property type="entry name" value="GLGE_C"/>
</dbReference>
<dbReference type="InterPro" id="IPR021828">
    <property type="entry name" value="GlgE_dom_N/S"/>
</dbReference>
<dbReference type="InterPro" id="IPR006047">
    <property type="entry name" value="Glyco_hydro_13_cat_dom"/>
</dbReference>
<dbReference type="InterPro" id="IPR013780">
    <property type="entry name" value="Glyco_hydro_b"/>
</dbReference>
<dbReference type="InterPro" id="IPR017853">
    <property type="entry name" value="Glycoside_hydrolase_SF"/>
</dbReference>
<dbReference type="InterPro" id="IPR013783">
    <property type="entry name" value="Ig-like_fold"/>
</dbReference>
<dbReference type="PANTHER" id="PTHR47786">
    <property type="entry name" value="ALPHA-1,4-GLUCAN:MALTOSE-1-PHOSPHATE MALTOSYLTRANSFERASE"/>
    <property type="match status" value="1"/>
</dbReference>
<dbReference type="PANTHER" id="PTHR47786:SF2">
    <property type="entry name" value="GLYCOSYL HYDROLASE FAMILY 13 CATALYTIC DOMAIN-CONTAINING PROTEIN"/>
    <property type="match status" value="1"/>
</dbReference>
<dbReference type="Pfam" id="PF21702">
    <property type="entry name" value="GLGE_C"/>
    <property type="match status" value="1"/>
</dbReference>
<dbReference type="Pfam" id="PF11896">
    <property type="entry name" value="GlgE_dom_N_S"/>
    <property type="match status" value="1"/>
</dbReference>
<dbReference type="SMART" id="SM00642">
    <property type="entry name" value="Aamy"/>
    <property type="match status" value="1"/>
</dbReference>
<dbReference type="SUPFAM" id="SSF51445">
    <property type="entry name" value="(Trans)glycosidases"/>
    <property type="match status" value="1"/>
</dbReference>
<reference key="1">
    <citation type="journal article" date="2011" name="PLoS ONE">
        <title>Evidence for reductive genome evolution and lateral acquisition of virulence functions in two Corynebacterium pseudotuberculosis strains.</title>
        <authorList>
            <person name="Ruiz J.C."/>
            <person name="D'Afonseca V."/>
            <person name="Silva A."/>
            <person name="Ali A."/>
            <person name="Pinto A.C."/>
            <person name="Santos A.R."/>
            <person name="Rocha A.A."/>
            <person name="Lopes D.O."/>
            <person name="Dorella F.A."/>
            <person name="Pacheco L.G."/>
            <person name="Costa M.P."/>
            <person name="Turk M.Z."/>
            <person name="Seyffert N."/>
            <person name="Moraes P.M."/>
            <person name="Soares S.C."/>
            <person name="Almeida S.S."/>
            <person name="Castro T.L."/>
            <person name="Abreu V.A."/>
            <person name="Trost E."/>
            <person name="Baumbach J."/>
            <person name="Tauch A."/>
            <person name="Schneider M.P."/>
            <person name="McCulloch J."/>
            <person name="Cerdeira L.T."/>
            <person name="Ramos R.T."/>
            <person name="Zerlotini A."/>
            <person name="Dominitini A."/>
            <person name="Resende D.M."/>
            <person name="Coser E.M."/>
            <person name="Oliveira L.M."/>
            <person name="Pedrosa A.L."/>
            <person name="Vieira C.U."/>
            <person name="Guimaraes C.T."/>
            <person name="Bartholomeu D.C."/>
            <person name="Oliveira D.M."/>
            <person name="Santos F.R."/>
            <person name="Rabelo E.M."/>
            <person name="Lobo F.P."/>
            <person name="Franco G.R."/>
            <person name="Costa A.F."/>
            <person name="Castro I.M."/>
            <person name="Dias S.R."/>
            <person name="Ferro J.A."/>
            <person name="Ortega J.M."/>
            <person name="Paiva L.V."/>
            <person name="Goulart L.R."/>
            <person name="Almeida J.F."/>
            <person name="Ferro M.I."/>
            <person name="Carneiro N.P."/>
            <person name="Falcao P.R."/>
            <person name="Grynberg P."/>
            <person name="Teixeira S.M."/>
            <person name="Brommonschenkel S."/>
            <person name="Oliveira S.C."/>
            <person name="Meyer R."/>
            <person name="Moore R.J."/>
            <person name="Miyoshi A."/>
            <person name="Oliveira G.C."/>
            <person name="Azevedo V."/>
        </authorList>
    </citation>
    <scope>NUCLEOTIDE SEQUENCE [LARGE SCALE GENOMIC DNA]</scope>
    <source>
        <strain>1002</strain>
    </source>
</reference>
<name>GLGE_CORP1</name>
<evidence type="ECO:0000255" key="1">
    <source>
        <dbReference type="HAMAP-Rule" id="MF_02124"/>
    </source>
</evidence>
<evidence type="ECO:0000305" key="2"/>
<feature type="chain" id="PRO_0000413896" description="Alpha-1,4-glucan:maltose-1-phosphate maltosyltransferase">
    <location>
        <begin position="1"/>
        <end position="671"/>
    </location>
</feature>
<feature type="active site" description="Nucleophile" evidence="1">
    <location>
        <position position="382"/>
    </location>
</feature>
<feature type="active site" description="Proton donor" evidence="1">
    <location>
        <position position="411"/>
    </location>
</feature>
<feature type="binding site" evidence="1">
    <location>
        <position position="252"/>
    </location>
    <ligand>
        <name>alpha-maltose 1-phosphate</name>
        <dbReference type="ChEBI" id="CHEBI:63576"/>
    </ligand>
</feature>
<feature type="binding site" evidence="1">
    <location>
        <position position="312"/>
    </location>
    <ligand>
        <name>alpha-maltose 1-phosphate</name>
        <dbReference type="ChEBI" id="CHEBI:63576"/>
    </ligand>
</feature>
<feature type="binding site" evidence="1">
    <location>
        <position position="347"/>
    </location>
    <ligand>
        <name>alpha-maltose 1-phosphate</name>
        <dbReference type="ChEBI" id="CHEBI:63576"/>
    </ligand>
</feature>
<feature type="binding site" evidence="1">
    <location>
        <position position="383"/>
    </location>
    <ligand>
        <name>alpha-maltose 1-phosphate</name>
        <dbReference type="ChEBI" id="CHEBI:63576"/>
    </ligand>
</feature>
<feature type="binding site" evidence="1">
    <location>
        <begin position="521"/>
        <end position="522"/>
    </location>
    <ligand>
        <name>alpha-maltose 1-phosphate</name>
        <dbReference type="ChEBI" id="CHEBI:63576"/>
    </ligand>
</feature>
<feature type="site" description="Transition state stabilizer" evidence="1">
    <location>
        <position position="467"/>
    </location>
</feature>
<proteinExistence type="inferred from homology"/>
<organism>
    <name type="scientific">Corynebacterium pseudotuberculosis (strain 1002)</name>
    <dbReference type="NCBI Taxonomy" id="679896"/>
    <lineage>
        <taxon>Bacteria</taxon>
        <taxon>Bacillati</taxon>
        <taxon>Actinomycetota</taxon>
        <taxon>Actinomycetes</taxon>
        <taxon>Mycobacteriales</taxon>
        <taxon>Corynebacteriaceae</taxon>
        <taxon>Corynebacterium</taxon>
    </lineage>
</organism>
<keyword id="KW-0119">Carbohydrate metabolism</keyword>
<keyword id="KW-0328">Glycosyltransferase</keyword>
<keyword id="KW-0808">Transferase</keyword>
<accession>D9Q7U8</accession>
<protein>
    <recommendedName>
        <fullName evidence="1">Alpha-1,4-glucan:maltose-1-phosphate maltosyltransferase</fullName>
        <shortName evidence="1">GMPMT</shortName>
        <ecNumber evidence="1">2.4.99.16</ecNumber>
    </recommendedName>
    <alternativeName>
        <fullName evidence="1">(1-&gt;4)-alpha-D-glucan:maltose-1-phosphate alpha-D-maltosyltransferase</fullName>
    </alternativeName>
</protein>
<gene>
    <name evidence="1" type="primary">glgE</name>
    <name type="ordered locus">Cp1002_0855</name>
</gene>